<protein>
    <recommendedName>
        <fullName>Transactivator/viroplasmin protein</fullName>
        <shortName>Tav</shortName>
    </recommendedName>
    <alternativeName>
        <fullName>Inclusion body matrix protein</fullName>
    </alternativeName>
</protein>
<evidence type="ECO:0000250" key="1">
    <source>
        <dbReference type="UniProtKB" id="P03558"/>
    </source>
</evidence>
<evidence type="ECO:0000256" key="2">
    <source>
        <dbReference type="SAM" id="MobiDB-lite"/>
    </source>
</evidence>
<evidence type="ECO:0000305" key="3"/>
<comment type="function">
    <text evidence="1">Enhances the ribosomal termination-reinitiation event leading to the translation of major open reading frames on the polycistronic viral RNAs.</text>
</comment>
<comment type="subcellular location">
    <subcellularLocation>
        <location>Host cytoplasm</location>
    </subcellularLocation>
    <text>Found in cytoplasmic occlusion bodies.</text>
</comment>
<comment type="miscellaneous">
    <text>The inclusion bodies are the site of viral DNA synthesis, virion assembly and accumulation in the infected cell.</text>
</comment>
<comment type="similarity">
    <text evidence="3">Belongs to the caulimoviridae viroplasmin family.</text>
</comment>
<proteinExistence type="inferred from homology"/>
<keyword id="KW-1035">Host cytoplasm</keyword>
<keyword id="KW-0810">Translation regulation</keyword>
<gene>
    <name type="ORF">ORF VI</name>
</gene>
<feature type="chain" id="PRO_0000222041" description="Transactivator/viroplasmin protein">
    <location>
        <begin position="1"/>
        <end position="520"/>
    </location>
</feature>
<feature type="region of interest" description="Disordered" evidence="2">
    <location>
        <begin position="486"/>
        <end position="520"/>
    </location>
</feature>
<organism>
    <name type="scientific">Cauliflower mosaic virus (strain BBC)</name>
    <name type="common">CaMV</name>
    <dbReference type="NCBI Taxonomy" id="31556"/>
    <lineage>
        <taxon>Viruses</taxon>
        <taxon>Riboviria</taxon>
        <taxon>Pararnavirae</taxon>
        <taxon>Artverviricota</taxon>
        <taxon>Revtraviricetes</taxon>
        <taxon>Ortervirales</taxon>
        <taxon>Caulimoviridae</taxon>
        <taxon>Caulimovirus</taxon>
        <taxon>Caulimovirus tessellobrassicae</taxon>
    </lineage>
</organism>
<sequence>MENIEKLLMQEKILMLELDLVRAKISLARANGSSQQGDLSLHRETPVKEEAVHSALATFTPTQVKAIPEQTAPGKESTNPLMASILPKDMNPVQTGIRLAVPGDFLRPHQGIPIPQKSELSSTVVPLRDESGIQHPHINYYVVYNGPHAGIYDDWGCTKAATNGVPGVAHKKFATITEARAAADAYTTSQQTDRLNFIPKGEAQLKPKSFREALTSPPKQKAHWLTLGTKRPSSDPAPKEISFAPEITMDDFLYLYDLGRKFDGEGDDTMFTTDNEKISLFNFRKNADPQMVREAYAAGLIKTIYPSNNLQEIKYLPKKVKDAVKRFRTNCIKNTEKDIFLKIRSTIPVWTIQGLLHKPRQVIEIGVSKKVVPTESKAMESKIQIEDLTELAVKTGEQFIQSLLRLNDKKKIFVNMVEDDTLVYSKNIKDTVSEDQRAIETFQQRVISGNLLGFHCPAICHFIERTVEKEGGSYKVHHCDKGKAIVQDASADSGPKDGPPPTRSIVEKEDVPTTSSKQVD</sequence>
<organismHost>
    <name type="scientific">Arabidopsis thaliana</name>
    <name type="common">Mouse-ear cress</name>
    <dbReference type="NCBI Taxonomy" id="3702"/>
</organismHost>
<organismHost>
    <name type="scientific">Brassica</name>
    <dbReference type="NCBI Taxonomy" id="3705"/>
</organismHost>
<organismHost>
    <name type="scientific">Raphanus</name>
    <dbReference type="NCBI Taxonomy" id="3725"/>
</organismHost>
<dbReference type="EMBL" id="M90542">
    <property type="protein sequence ID" value="AAA62376.1"/>
    <property type="molecule type" value="Genomic_DNA"/>
</dbReference>
<dbReference type="PIR" id="JN0498">
    <property type="entry name" value="JN0498"/>
</dbReference>
<dbReference type="SMR" id="Q02954"/>
<dbReference type="Proteomes" id="UP000008440">
    <property type="component" value="Genome"/>
</dbReference>
<dbReference type="GO" id="GO:0030430">
    <property type="term" value="C:host cell cytoplasm"/>
    <property type="evidence" value="ECO:0007669"/>
    <property type="project" value="UniProtKB-SubCell"/>
</dbReference>
<dbReference type="GO" id="GO:0006417">
    <property type="term" value="P:regulation of translation"/>
    <property type="evidence" value="ECO:0007669"/>
    <property type="project" value="UniProtKB-KW"/>
</dbReference>
<dbReference type="FunFam" id="3.40.970.10:FF:000003">
    <property type="entry name" value="Transactivator/viroplasmin protein"/>
    <property type="match status" value="1"/>
</dbReference>
<dbReference type="Gene3D" id="3.40.970.10">
    <property type="entry name" value="Ribonuclease H1, N-terminal domain"/>
    <property type="match status" value="1"/>
</dbReference>
<dbReference type="InterPro" id="IPR009027">
    <property type="entry name" value="Ribosomal_bL9/RNase_H1_N"/>
</dbReference>
<dbReference type="InterPro" id="IPR011320">
    <property type="entry name" value="RNase_H1_N"/>
</dbReference>
<dbReference type="InterPro" id="IPR037056">
    <property type="entry name" value="RNase_H1_N_sf"/>
</dbReference>
<dbReference type="Pfam" id="PF01693">
    <property type="entry name" value="Cauli_VI"/>
    <property type="match status" value="1"/>
</dbReference>
<dbReference type="SUPFAM" id="SSF55658">
    <property type="entry name" value="L9 N-domain-like"/>
    <property type="match status" value="1"/>
</dbReference>
<accession>Q02954</accession>
<reference key="1">
    <citation type="journal article" date="1993" name="Gene">
        <title>The complete nucleotide sequence of cauliflower mosaic virus isolate BBC.</title>
        <authorList>
            <person name="Chenault K.D."/>
            <person name="Melcher U.K."/>
        </authorList>
    </citation>
    <scope>NUCLEOTIDE SEQUENCE [GENOMIC DNA]</scope>
</reference>
<name>IBMP_CAMVE</name>